<name>MVP_TOMK2</name>
<evidence type="ECO:0000250" key="1">
    <source>
        <dbReference type="UniProtKB" id="A0A0S4IJL0"/>
    </source>
</evidence>
<evidence type="ECO:0000250" key="2">
    <source>
        <dbReference type="UniProtKB" id="P03583"/>
    </source>
</evidence>
<evidence type="ECO:0000250" key="3">
    <source>
        <dbReference type="UniProtKB" id="P69513"/>
    </source>
</evidence>
<evidence type="ECO:0000256" key="4">
    <source>
        <dbReference type="SAM" id="MobiDB-lite"/>
    </source>
</evidence>
<evidence type="ECO:0000305" key="5"/>
<dbReference type="EMBL" id="Z92909">
    <property type="protein sequence ID" value="CAB07440.1"/>
    <property type="molecule type" value="Genomic_RNA"/>
</dbReference>
<dbReference type="Proteomes" id="UP000008253">
    <property type="component" value="Genome"/>
</dbReference>
<dbReference type="GO" id="GO:0030430">
    <property type="term" value="C:host cell cytoplasm"/>
    <property type="evidence" value="ECO:0007669"/>
    <property type="project" value="UniProtKB-KW"/>
</dbReference>
<dbReference type="GO" id="GO:0044219">
    <property type="term" value="C:host cell plasmodesma"/>
    <property type="evidence" value="ECO:0007669"/>
    <property type="project" value="UniProtKB-SubCell"/>
</dbReference>
<dbReference type="GO" id="GO:0044163">
    <property type="term" value="C:host cytoskeleton"/>
    <property type="evidence" value="ECO:0007669"/>
    <property type="project" value="UniProtKB-SubCell"/>
</dbReference>
<dbReference type="GO" id="GO:0003723">
    <property type="term" value="F:RNA binding"/>
    <property type="evidence" value="ECO:0007669"/>
    <property type="project" value="UniProtKB-KW"/>
</dbReference>
<dbReference type="GO" id="GO:0046740">
    <property type="term" value="P:transport of virus in host, cell to cell"/>
    <property type="evidence" value="ECO:0007669"/>
    <property type="project" value="UniProtKB-KW"/>
</dbReference>
<dbReference type="InterPro" id="IPR001022">
    <property type="entry name" value="TMV_movement"/>
</dbReference>
<dbReference type="InterPro" id="IPR028919">
    <property type="entry name" value="Viral_movement"/>
</dbReference>
<dbReference type="Pfam" id="PF01107">
    <property type="entry name" value="MP"/>
    <property type="match status" value="1"/>
</dbReference>
<dbReference type="PRINTS" id="PR00964">
    <property type="entry name" value="MOVEMENT"/>
</dbReference>
<protein>
    <recommendedName>
        <fullName>Movement protein</fullName>
    </recommendedName>
    <alternativeName>
        <fullName>30 kDa protein</fullName>
    </alternativeName>
    <alternativeName>
        <fullName>Cell-to-cell transport protein</fullName>
    </alternativeName>
</protein>
<feature type="chain" id="PRO_0000144969" description="Movement protein">
    <location>
        <begin position="1"/>
        <end position="264"/>
    </location>
</feature>
<feature type="region of interest" description="Disordered" evidence="4">
    <location>
        <begin position="211"/>
        <end position="264"/>
    </location>
</feature>
<feature type="compositionally biased region" description="Basic and acidic residues" evidence="4">
    <location>
        <begin position="237"/>
        <end position="247"/>
    </location>
</feature>
<organism>
    <name type="scientific">Tomato mosaic virus (strain Kazakh K2)</name>
    <name type="common">ToMV</name>
    <name type="synonym">TMV strain K2</name>
    <dbReference type="NCBI Taxonomy" id="138312"/>
    <lineage>
        <taxon>Viruses</taxon>
        <taxon>Riboviria</taxon>
        <taxon>Orthornavirae</taxon>
        <taxon>Kitrinoviricota</taxon>
        <taxon>Alsuviricetes</taxon>
        <taxon>Martellivirales</taxon>
        <taxon>Virgaviridae</taxon>
        <taxon>Tobamovirus</taxon>
        <taxon>Tomato mosaic virus</taxon>
    </lineage>
</organism>
<organismHost>
    <name type="scientific">Antirrhinum majus</name>
    <name type="common">Garden snapdragon</name>
    <dbReference type="NCBI Taxonomy" id="4151"/>
</organismHost>
<organismHost>
    <name type="scientific">Capsicum</name>
    <name type="common">peppers</name>
    <dbReference type="NCBI Taxonomy" id="4071"/>
</organismHost>
<organismHost>
    <name type="scientific">Delphinium</name>
    <dbReference type="NCBI Taxonomy" id="46246"/>
</organismHost>
<organismHost>
    <name type="scientific">Petunia</name>
    <dbReference type="NCBI Taxonomy" id="4101"/>
</organismHost>
<organismHost>
    <name type="scientific">Solanum lycopersicum</name>
    <name type="common">Tomato</name>
    <name type="synonym">Lycopersicon esculentum</name>
    <dbReference type="NCBI Taxonomy" id="4081"/>
</organismHost>
<organismHost>
    <name type="scientific">Tagetes</name>
    <name type="common">marigolds</name>
    <dbReference type="NCBI Taxonomy" id="13707"/>
</organismHost>
<proteinExistence type="inferred from homology"/>
<accession>P69512</accession>
<accession>P03584</accession>
<gene>
    <name type="primary">MP</name>
</gene>
<sequence length="264" mass="29291">MALVVKGKVNINEFIDLSKSEKLLPSMFTPVKSVMVSKVDKIMVHENESLSEVNLLKGVKLIEGGYVCLVGLVVSGEWNLPDNCRGGVSVCMVDKRMERADEATLGSYYTAAAKKRFQFKVVPNYGITTKDAEKNIWQVLVNIKNVKMSAGYCPLSLEFVSVCIVYKNNIKLGLREKVTSVNDGGPMELSEEVVDEFMENVPMSVRLAKFRTKSSKRGPKNNNNLGKGRSGGRPKPKSFDEVEKEFDNLIEDEAETSVADSDSY</sequence>
<reference key="1">
    <citation type="journal article" date="1997" name="Mol. Biol. (Mosk.)">
        <title>Properties and structure of the tobacco mosaic virus strain K2 genome.</title>
        <authorList>
            <person name="Belenovich E.V."/>
            <person name="Generozov E.V."/>
            <person name="Novikov V.K."/>
            <person name="Zavriev S.K."/>
        </authorList>
    </citation>
    <scope>NUCLEOTIDE SEQUENCE [GENOMIC RNA]</scope>
</reference>
<keyword id="KW-1031">Host cell junction</keyword>
<keyword id="KW-1035">Host cytoplasm</keyword>
<keyword id="KW-1037">Host cytoskeleton</keyword>
<keyword id="KW-0694">RNA-binding</keyword>
<keyword id="KW-0813">Transport</keyword>
<keyword id="KW-0916">Viral movement protein</keyword>
<comment type="function">
    <text evidence="2 3">Transports viral genome to neighboring plant cells directly through plasmosdesmata, without any budding. The movement protein allows efficient cell to cell propagation, by bypassing the host cell wall barrier. Forms a ribonucleoprotein complex with viral RNA. Binds microtubules and modulates microtubule stability. Can bind double-stranded DNA. Triggers host hypersensitive defense reaction in incompatible plants harboring resistance (R) proteins.</text>
</comment>
<comment type="subunit">
    <text evidence="1 2 3">Binds to host RBCS at the plasmodesmata; this interaction seems required for viral systemic movement (By similarity). In resistant plants, interacts with host MBP2C at host microtubules; this interaction prevents virus cell to cell movement. In resistant plants, interacts with host resistance (R) protein (e.g. tomato ToMV resistance protein TM-2(2), AC Q71BG9) at the host plasma membrane; this interaction triggers host defense responses leading to programmed cell death (By similarity).</text>
</comment>
<comment type="subcellular location">
    <subcellularLocation>
        <location evidence="3">Host cytoplasm</location>
        <location evidence="3">Host cytoskeleton</location>
    </subcellularLocation>
    <subcellularLocation>
        <location evidence="3">Host cell junction</location>
        <location evidence="3">Host plasmodesma</location>
    </subcellularLocation>
    <text evidence="2 3">Binds to the host cytoskeleton before being transported to the host plasmodesmata. Observed in virus replication complexes (VRCs) of tobamovirus infected host cells (By similarity). In resistant plants, targeted to the host plasma membrane via the interaction with host resistance (R) protein TM-2 (e.g. tomato ToMV resistance protein TM-2(2), AC Q71BG9) (By similarity).</text>
</comment>
<comment type="similarity">
    <text evidence="5">Belongs to the tobamovirus movement protein family.</text>
</comment>